<name>HYPA_DESHY</name>
<evidence type="ECO:0000255" key="1">
    <source>
        <dbReference type="HAMAP-Rule" id="MF_00213"/>
    </source>
</evidence>
<accession>Q24MA9</accession>
<organism>
    <name type="scientific">Desulfitobacterium hafniense (strain Y51)</name>
    <dbReference type="NCBI Taxonomy" id="138119"/>
    <lineage>
        <taxon>Bacteria</taxon>
        <taxon>Bacillati</taxon>
        <taxon>Bacillota</taxon>
        <taxon>Clostridia</taxon>
        <taxon>Eubacteriales</taxon>
        <taxon>Desulfitobacteriaceae</taxon>
        <taxon>Desulfitobacterium</taxon>
    </lineage>
</organism>
<gene>
    <name evidence="1" type="primary">hypA</name>
    <name type="ordered locus">DSY5044</name>
</gene>
<keyword id="KW-0479">Metal-binding</keyword>
<keyword id="KW-0533">Nickel</keyword>
<keyword id="KW-1185">Reference proteome</keyword>
<keyword id="KW-0862">Zinc</keyword>
<reference key="1">
    <citation type="journal article" date="2006" name="J. Bacteriol.">
        <title>Complete genome sequence of the dehalorespiring bacterium Desulfitobacterium hafniense Y51 and comparison with Dehalococcoides ethenogenes 195.</title>
        <authorList>
            <person name="Nonaka H."/>
            <person name="Keresztes G."/>
            <person name="Shinoda Y."/>
            <person name="Ikenaga Y."/>
            <person name="Abe M."/>
            <person name="Naito K."/>
            <person name="Inatomi K."/>
            <person name="Furukawa K."/>
            <person name="Inui M."/>
            <person name="Yukawa H."/>
        </authorList>
    </citation>
    <scope>NUCLEOTIDE SEQUENCE [LARGE SCALE GENOMIC DNA]</scope>
    <source>
        <strain>Y51</strain>
    </source>
</reference>
<proteinExistence type="inferred from homology"/>
<sequence>MHEMSLMGGVFEAIEATLAHHHVKKVLLVKLKIGQLTNAEPDALQMAFAAFAQGTVCEGAELQIEMLPVKGRCRSCSEEFMVPGLIFACPVCQHLGIDITQGEELLLESLEVEE</sequence>
<feature type="chain" id="PRO_1000023827" description="Hydrogenase maturation factor HypA">
    <location>
        <begin position="1"/>
        <end position="114"/>
    </location>
</feature>
<feature type="binding site" evidence="1">
    <location>
        <position position="2"/>
    </location>
    <ligand>
        <name>Ni(2+)</name>
        <dbReference type="ChEBI" id="CHEBI:49786"/>
    </ligand>
</feature>
<feature type="binding site" evidence="1">
    <location>
        <position position="73"/>
    </location>
    <ligand>
        <name>Zn(2+)</name>
        <dbReference type="ChEBI" id="CHEBI:29105"/>
    </ligand>
</feature>
<feature type="binding site" evidence="1">
    <location>
        <position position="76"/>
    </location>
    <ligand>
        <name>Zn(2+)</name>
        <dbReference type="ChEBI" id="CHEBI:29105"/>
    </ligand>
</feature>
<feature type="binding site" evidence="1">
    <location>
        <position position="89"/>
    </location>
    <ligand>
        <name>Zn(2+)</name>
        <dbReference type="ChEBI" id="CHEBI:29105"/>
    </ligand>
</feature>
<feature type="binding site" evidence="1">
    <location>
        <position position="92"/>
    </location>
    <ligand>
        <name>Zn(2+)</name>
        <dbReference type="ChEBI" id="CHEBI:29105"/>
    </ligand>
</feature>
<protein>
    <recommendedName>
        <fullName evidence="1">Hydrogenase maturation factor HypA</fullName>
    </recommendedName>
</protein>
<dbReference type="EMBL" id="AP008230">
    <property type="protein sequence ID" value="BAE86833.1"/>
    <property type="molecule type" value="Genomic_DNA"/>
</dbReference>
<dbReference type="RefSeq" id="WP_011462320.1">
    <property type="nucleotide sequence ID" value="NC_007907.1"/>
</dbReference>
<dbReference type="SMR" id="Q24MA9"/>
<dbReference type="STRING" id="138119.DSY5044"/>
<dbReference type="KEGG" id="dsy:DSY5044"/>
<dbReference type="eggNOG" id="COG0375">
    <property type="taxonomic scope" value="Bacteria"/>
</dbReference>
<dbReference type="HOGENOM" id="CLU_126929_0_0_9"/>
<dbReference type="Proteomes" id="UP000001946">
    <property type="component" value="Chromosome"/>
</dbReference>
<dbReference type="GO" id="GO:0016151">
    <property type="term" value="F:nickel cation binding"/>
    <property type="evidence" value="ECO:0007669"/>
    <property type="project" value="UniProtKB-UniRule"/>
</dbReference>
<dbReference type="GO" id="GO:0008270">
    <property type="term" value="F:zinc ion binding"/>
    <property type="evidence" value="ECO:0007669"/>
    <property type="project" value="UniProtKB-UniRule"/>
</dbReference>
<dbReference type="GO" id="GO:0051604">
    <property type="term" value="P:protein maturation"/>
    <property type="evidence" value="ECO:0007669"/>
    <property type="project" value="InterPro"/>
</dbReference>
<dbReference type="GO" id="GO:0036211">
    <property type="term" value="P:protein modification process"/>
    <property type="evidence" value="ECO:0007669"/>
    <property type="project" value="UniProtKB-UniRule"/>
</dbReference>
<dbReference type="Gene3D" id="3.30.2320.80">
    <property type="match status" value="1"/>
</dbReference>
<dbReference type="HAMAP" id="MF_00213">
    <property type="entry name" value="HypA_HybF"/>
    <property type="match status" value="1"/>
</dbReference>
<dbReference type="InterPro" id="IPR000688">
    <property type="entry name" value="HypA/HybF"/>
</dbReference>
<dbReference type="NCBIfam" id="TIGR00100">
    <property type="entry name" value="hypA"/>
    <property type="match status" value="1"/>
</dbReference>
<dbReference type="PANTHER" id="PTHR34535">
    <property type="entry name" value="HYDROGENASE MATURATION FACTOR HYPA"/>
    <property type="match status" value="1"/>
</dbReference>
<dbReference type="PANTHER" id="PTHR34535:SF3">
    <property type="entry name" value="HYDROGENASE MATURATION FACTOR HYPA"/>
    <property type="match status" value="1"/>
</dbReference>
<dbReference type="Pfam" id="PF01155">
    <property type="entry name" value="HypA"/>
    <property type="match status" value="1"/>
</dbReference>
<dbReference type="PIRSF" id="PIRSF004761">
    <property type="entry name" value="Hydrgn_mat_HypA"/>
    <property type="match status" value="1"/>
</dbReference>
<comment type="function">
    <text evidence="1">Involved in the maturation of [NiFe] hydrogenases. Required for nickel insertion into the metal center of the hydrogenase.</text>
</comment>
<comment type="similarity">
    <text evidence="1">Belongs to the HypA/HybF family.</text>
</comment>